<keyword id="KW-0687">Ribonucleoprotein</keyword>
<keyword id="KW-0689">Ribosomal protein</keyword>
<keyword id="KW-0694">RNA-binding</keyword>
<keyword id="KW-0699">rRNA-binding</keyword>
<feature type="chain" id="PRO_1000087205" description="Large ribosomal subunit protein uL23">
    <location>
        <begin position="1"/>
        <end position="96"/>
    </location>
</feature>
<name>RL23_BACCN</name>
<gene>
    <name evidence="1" type="primary">rplW</name>
    <name type="ordered locus">Bcer98_0106</name>
</gene>
<evidence type="ECO:0000255" key="1">
    <source>
        <dbReference type="HAMAP-Rule" id="MF_01369"/>
    </source>
</evidence>
<evidence type="ECO:0000305" key="2"/>
<comment type="function">
    <text evidence="1">One of the early assembly proteins it binds 23S rRNA. One of the proteins that surrounds the polypeptide exit tunnel on the outside of the ribosome. Forms the main docking site for trigger factor binding to the ribosome.</text>
</comment>
<comment type="subunit">
    <text evidence="1">Part of the 50S ribosomal subunit. Contacts protein L29, and trigger factor when it is bound to the ribosome.</text>
</comment>
<comment type="similarity">
    <text evidence="1">Belongs to the universal ribosomal protein uL23 family.</text>
</comment>
<organism>
    <name type="scientific">Bacillus cytotoxicus (strain DSM 22905 / CIP 110041 / 391-98 / NVH 391-98)</name>
    <dbReference type="NCBI Taxonomy" id="315749"/>
    <lineage>
        <taxon>Bacteria</taxon>
        <taxon>Bacillati</taxon>
        <taxon>Bacillota</taxon>
        <taxon>Bacilli</taxon>
        <taxon>Bacillales</taxon>
        <taxon>Bacillaceae</taxon>
        <taxon>Bacillus</taxon>
        <taxon>Bacillus cereus group</taxon>
    </lineage>
</organism>
<dbReference type="EMBL" id="CP000764">
    <property type="protein sequence ID" value="ABS20480.1"/>
    <property type="molecule type" value="Genomic_DNA"/>
</dbReference>
<dbReference type="RefSeq" id="WP_011983247.1">
    <property type="nucleotide sequence ID" value="NC_009674.1"/>
</dbReference>
<dbReference type="SMR" id="A7GK22"/>
<dbReference type="STRING" id="315749.Bcer98_0106"/>
<dbReference type="GeneID" id="33895427"/>
<dbReference type="KEGG" id="bcy:Bcer98_0106"/>
<dbReference type="eggNOG" id="COG0089">
    <property type="taxonomic scope" value="Bacteria"/>
</dbReference>
<dbReference type="HOGENOM" id="CLU_037562_3_2_9"/>
<dbReference type="OrthoDB" id="9793353at2"/>
<dbReference type="Proteomes" id="UP000002300">
    <property type="component" value="Chromosome"/>
</dbReference>
<dbReference type="GO" id="GO:1990904">
    <property type="term" value="C:ribonucleoprotein complex"/>
    <property type="evidence" value="ECO:0007669"/>
    <property type="project" value="UniProtKB-KW"/>
</dbReference>
<dbReference type="GO" id="GO:0005840">
    <property type="term" value="C:ribosome"/>
    <property type="evidence" value="ECO:0007669"/>
    <property type="project" value="UniProtKB-KW"/>
</dbReference>
<dbReference type="GO" id="GO:0019843">
    <property type="term" value="F:rRNA binding"/>
    <property type="evidence" value="ECO:0007669"/>
    <property type="project" value="UniProtKB-UniRule"/>
</dbReference>
<dbReference type="GO" id="GO:0003735">
    <property type="term" value="F:structural constituent of ribosome"/>
    <property type="evidence" value="ECO:0007669"/>
    <property type="project" value="InterPro"/>
</dbReference>
<dbReference type="GO" id="GO:0006412">
    <property type="term" value="P:translation"/>
    <property type="evidence" value="ECO:0007669"/>
    <property type="project" value="UniProtKB-UniRule"/>
</dbReference>
<dbReference type="FunFam" id="3.30.70.330:FF:000001">
    <property type="entry name" value="50S ribosomal protein L23"/>
    <property type="match status" value="1"/>
</dbReference>
<dbReference type="Gene3D" id="3.30.70.330">
    <property type="match status" value="1"/>
</dbReference>
<dbReference type="HAMAP" id="MF_01369_B">
    <property type="entry name" value="Ribosomal_uL23_B"/>
    <property type="match status" value="1"/>
</dbReference>
<dbReference type="InterPro" id="IPR012677">
    <property type="entry name" value="Nucleotide-bd_a/b_plait_sf"/>
</dbReference>
<dbReference type="InterPro" id="IPR013025">
    <property type="entry name" value="Ribosomal_uL23-like"/>
</dbReference>
<dbReference type="InterPro" id="IPR012678">
    <property type="entry name" value="Ribosomal_uL23/eL15/eS24_sf"/>
</dbReference>
<dbReference type="InterPro" id="IPR001014">
    <property type="entry name" value="Ribosomal_uL23_CS"/>
</dbReference>
<dbReference type="NCBIfam" id="NF004363">
    <property type="entry name" value="PRK05738.2-4"/>
    <property type="match status" value="1"/>
</dbReference>
<dbReference type="PANTHER" id="PTHR11620">
    <property type="entry name" value="60S RIBOSOMAL PROTEIN L23A"/>
    <property type="match status" value="1"/>
</dbReference>
<dbReference type="Pfam" id="PF00276">
    <property type="entry name" value="Ribosomal_L23"/>
    <property type="match status" value="1"/>
</dbReference>
<dbReference type="SUPFAM" id="SSF54189">
    <property type="entry name" value="Ribosomal proteins S24e, L23 and L15e"/>
    <property type="match status" value="1"/>
</dbReference>
<dbReference type="PROSITE" id="PS00050">
    <property type="entry name" value="RIBOSOMAL_L23"/>
    <property type="match status" value="1"/>
</dbReference>
<proteinExistence type="inferred from homology"/>
<sequence>MRDPRDIIKRPVITERSMEMMAEKKYTFDVDVKANKTEVKDAVEAIFGVEVEKVNIMNYKPKAKRVGRHAGFTNRRRKAIVKLTADSKEIEIFQGV</sequence>
<protein>
    <recommendedName>
        <fullName evidence="1">Large ribosomal subunit protein uL23</fullName>
    </recommendedName>
    <alternativeName>
        <fullName evidence="2">50S ribosomal protein L23</fullName>
    </alternativeName>
</protein>
<accession>A7GK22</accession>
<reference key="1">
    <citation type="journal article" date="2008" name="Chem. Biol. Interact.">
        <title>Extending the Bacillus cereus group genomics to putative food-borne pathogens of different toxicity.</title>
        <authorList>
            <person name="Lapidus A."/>
            <person name="Goltsman E."/>
            <person name="Auger S."/>
            <person name="Galleron N."/>
            <person name="Segurens B."/>
            <person name="Dossat C."/>
            <person name="Land M.L."/>
            <person name="Broussolle V."/>
            <person name="Brillard J."/>
            <person name="Guinebretiere M.-H."/>
            <person name="Sanchis V."/>
            <person name="Nguen-the C."/>
            <person name="Lereclus D."/>
            <person name="Richardson P."/>
            <person name="Wincker P."/>
            <person name="Weissenbach J."/>
            <person name="Ehrlich S.D."/>
            <person name="Sorokin A."/>
        </authorList>
    </citation>
    <scope>NUCLEOTIDE SEQUENCE [LARGE SCALE GENOMIC DNA]</scope>
    <source>
        <strain>DSM 22905 / CIP 110041 / 391-98 / NVH 391-98</strain>
    </source>
</reference>